<dbReference type="GO" id="GO:0005576">
    <property type="term" value="C:extracellular region"/>
    <property type="evidence" value="ECO:0007669"/>
    <property type="project" value="UniProtKB-SubCell"/>
</dbReference>
<dbReference type="GO" id="GO:0042742">
    <property type="term" value="P:defense response to bacterium"/>
    <property type="evidence" value="ECO:0007669"/>
    <property type="project" value="UniProtKB-KW"/>
</dbReference>
<dbReference type="GO" id="GO:0031640">
    <property type="term" value="P:killing of cells of another organism"/>
    <property type="evidence" value="ECO:0007669"/>
    <property type="project" value="UniProtKB-KW"/>
</dbReference>
<protein>
    <recommendedName>
        <fullName evidence="2">Bacteriocin</fullName>
    </recommendedName>
</protein>
<keyword id="KW-0044">Antibiotic</keyword>
<keyword id="KW-0929">Antimicrobial</keyword>
<keyword id="KW-0078">Bacteriocin</keyword>
<keyword id="KW-0903">Direct protein sequencing</keyword>
<keyword id="KW-0964">Secreted</keyword>
<comment type="function">
    <text evidence="1">Has antibacterial activity against strains of L.monocytogenes, L.lactis, B.subtilis, S.typhi, S.aureus, C.perfringens, E.aerogenes and M.luteus but not against E.coli, S.sonnei, S.pneumoniae, S.faecalis, P.aeruginosa, K.pneumoniae or P.vulgaris.</text>
</comment>
<comment type="biophysicochemical properties">
    <phDependence>
        <text evidence="1">Activity is stable between pH 2 and 9 but decreases at a more basic pH.</text>
    </phDependence>
    <temperatureDependence>
        <text evidence="1">Thermostable. Activity remains unaffected even after incubation at 100 degrees Celsius for 30 minutes.</text>
    </temperatureDependence>
</comment>
<comment type="subcellular location">
    <subcellularLocation>
        <location evidence="1">Secreted</location>
    </subcellularLocation>
</comment>
<reference evidence="3" key="1">
    <citation type="journal article" date="2012" name="World J. Microbiol. Biotechnol.">
        <title>Purification and partial characterization of bacteriocin produced by Lactococcus lactis ssp. lactis LL171.</title>
        <authorList>
            <person name="Kumari A."/>
            <person name="Akkoc N."/>
            <person name="Akcelik M."/>
        </authorList>
    </citation>
    <scope>PROTEIN SEQUENCE</scope>
    <scope>FUNCTION</scope>
    <scope>BIOPHYSICOCHEMICAL PROPERTIES</scope>
    <scope>SUBCELLULAR LOCATION</scope>
    <source>
        <strain evidence="2">LL171</strain>
    </source>
</reference>
<organism evidence="2">
    <name type="scientific">Lactococcus lactis subsp. lactis</name>
    <name type="common">Streptococcus lactis</name>
    <dbReference type="NCBI Taxonomy" id="1360"/>
    <lineage>
        <taxon>Bacteria</taxon>
        <taxon>Bacillati</taxon>
        <taxon>Bacillota</taxon>
        <taxon>Bacilli</taxon>
        <taxon>Lactobacillales</taxon>
        <taxon>Streptococcaceae</taxon>
        <taxon>Lactococcus</taxon>
    </lineage>
</organism>
<evidence type="ECO:0000269" key="1">
    <source>
    </source>
</evidence>
<evidence type="ECO:0000303" key="2">
    <source>
    </source>
</evidence>
<evidence type="ECO:0000305" key="3"/>
<proteinExistence type="evidence at protein level"/>
<sequence>KKIDTRTGKTMEKTEKKIELSLKNMKTAT</sequence>
<name>BCN1_LACLL</name>
<accession>P85833</accession>
<feature type="peptide" id="PRO_0000439206" description="Bacteriocin" evidence="1">
    <location>
        <begin position="1"/>
        <end position="29"/>
    </location>
</feature>